<reference key="1">
    <citation type="journal article" date="2003" name="Proc. Natl. Acad. Sci. U.S.A.">
        <title>The complete genome sequence of the carcinogenic bacterium Helicobacter hepaticus.</title>
        <authorList>
            <person name="Suerbaum S."/>
            <person name="Josenhans C."/>
            <person name="Sterzenbach T."/>
            <person name="Drescher B."/>
            <person name="Brandt P."/>
            <person name="Bell M."/>
            <person name="Droege M."/>
            <person name="Fartmann B."/>
            <person name="Fischer H.-P."/>
            <person name="Ge Z."/>
            <person name="Hoerster A."/>
            <person name="Holland R."/>
            <person name="Klein K."/>
            <person name="Koenig J."/>
            <person name="Macko L."/>
            <person name="Mendz G.L."/>
            <person name="Nyakatura G."/>
            <person name="Schauer D.B."/>
            <person name="Shen Z."/>
            <person name="Weber J."/>
            <person name="Frosch M."/>
            <person name="Fox J.G."/>
        </authorList>
    </citation>
    <scope>NUCLEOTIDE SEQUENCE [LARGE SCALE GENOMIC DNA]</scope>
    <source>
        <strain>ATCC 51449 / 3B1</strain>
    </source>
</reference>
<gene>
    <name evidence="1" type="primary">hisB</name>
    <name type="ordered locus">HH_1325</name>
</gene>
<accession>Q7VGJ6</accession>
<organism>
    <name type="scientific">Helicobacter hepaticus (strain ATCC 51449 / 3B1)</name>
    <dbReference type="NCBI Taxonomy" id="235279"/>
    <lineage>
        <taxon>Bacteria</taxon>
        <taxon>Pseudomonadati</taxon>
        <taxon>Campylobacterota</taxon>
        <taxon>Epsilonproteobacteria</taxon>
        <taxon>Campylobacterales</taxon>
        <taxon>Helicobacteraceae</taxon>
        <taxon>Helicobacter</taxon>
    </lineage>
</organism>
<keyword id="KW-0028">Amino-acid biosynthesis</keyword>
<keyword id="KW-0963">Cytoplasm</keyword>
<keyword id="KW-0368">Histidine biosynthesis</keyword>
<keyword id="KW-0456">Lyase</keyword>
<keyword id="KW-1185">Reference proteome</keyword>
<dbReference type="EC" id="4.2.1.19" evidence="1"/>
<dbReference type="EMBL" id="AE017125">
    <property type="protein sequence ID" value="AAP77922.1"/>
    <property type="molecule type" value="Genomic_DNA"/>
</dbReference>
<dbReference type="SMR" id="Q7VGJ6"/>
<dbReference type="STRING" id="235279.HH_1325"/>
<dbReference type="KEGG" id="hhe:HH_1325"/>
<dbReference type="eggNOG" id="COG0131">
    <property type="taxonomic scope" value="Bacteria"/>
</dbReference>
<dbReference type="HOGENOM" id="CLU_044308_3_0_7"/>
<dbReference type="UniPathway" id="UPA00031">
    <property type="reaction ID" value="UER00011"/>
</dbReference>
<dbReference type="Proteomes" id="UP000002495">
    <property type="component" value="Chromosome"/>
</dbReference>
<dbReference type="GO" id="GO:0005737">
    <property type="term" value="C:cytoplasm"/>
    <property type="evidence" value="ECO:0007669"/>
    <property type="project" value="UniProtKB-SubCell"/>
</dbReference>
<dbReference type="GO" id="GO:0004424">
    <property type="term" value="F:imidazoleglycerol-phosphate dehydratase activity"/>
    <property type="evidence" value="ECO:0007669"/>
    <property type="project" value="UniProtKB-UniRule"/>
</dbReference>
<dbReference type="GO" id="GO:0000105">
    <property type="term" value="P:L-histidine biosynthetic process"/>
    <property type="evidence" value="ECO:0007669"/>
    <property type="project" value="UniProtKB-UniRule"/>
</dbReference>
<dbReference type="CDD" id="cd07914">
    <property type="entry name" value="IGPD"/>
    <property type="match status" value="1"/>
</dbReference>
<dbReference type="FunFam" id="3.30.230.40:FF:000001">
    <property type="entry name" value="Imidazoleglycerol-phosphate dehydratase HisB"/>
    <property type="match status" value="1"/>
</dbReference>
<dbReference type="FunFam" id="3.30.230.40:FF:000003">
    <property type="entry name" value="Imidazoleglycerol-phosphate dehydratase HisB"/>
    <property type="match status" value="1"/>
</dbReference>
<dbReference type="Gene3D" id="3.30.230.40">
    <property type="entry name" value="Imidazole glycerol phosphate dehydratase, domain 1"/>
    <property type="match status" value="2"/>
</dbReference>
<dbReference type="HAMAP" id="MF_00076">
    <property type="entry name" value="HisB"/>
    <property type="match status" value="1"/>
</dbReference>
<dbReference type="InterPro" id="IPR038494">
    <property type="entry name" value="IGPD_sf"/>
</dbReference>
<dbReference type="InterPro" id="IPR000807">
    <property type="entry name" value="ImidazoleglycerolP_deHydtase"/>
</dbReference>
<dbReference type="InterPro" id="IPR020565">
    <property type="entry name" value="ImidazoleglycerP_deHydtase_CS"/>
</dbReference>
<dbReference type="InterPro" id="IPR020568">
    <property type="entry name" value="Ribosomal_Su5_D2-typ_SF"/>
</dbReference>
<dbReference type="NCBIfam" id="NF002114">
    <property type="entry name" value="PRK00951.2-4"/>
    <property type="match status" value="1"/>
</dbReference>
<dbReference type="PANTHER" id="PTHR23133:SF2">
    <property type="entry name" value="IMIDAZOLEGLYCEROL-PHOSPHATE DEHYDRATASE"/>
    <property type="match status" value="1"/>
</dbReference>
<dbReference type="PANTHER" id="PTHR23133">
    <property type="entry name" value="IMIDAZOLEGLYCEROL-PHOSPHATE DEHYDRATASE HIS7"/>
    <property type="match status" value="1"/>
</dbReference>
<dbReference type="Pfam" id="PF00475">
    <property type="entry name" value="IGPD"/>
    <property type="match status" value="1"/>
</dbReference>
<dbReference type="SUPFAM" id="SSF54211">
    <property type="entry name" value="Ribosomal protein S5 domain 2-like"/>
    <property type="match status" value="2"/>
</dbReference>
<dbReference type="PROSITE" id="PS00954">
    <property type="entry name" value="IGP_DEHYDRATASE_1"/>
    <property type="match status" value="1"/>
</dbReference>
<dbReference type="PROSITE" id="PS00955">
    <property type="entry name" value="IGP_DEHYDRATASE_2"/>
    <property type="match status" value="1"/>
</dbReference>
<protein>
    <recommendedName>
        <fullName evidence="1">Imidazoleglycerol-phosphate dehydratase</fullName>
        <shortName evidence="1">IGPD</shortName>
        <ecNumber evidence="1">4.2.1.19</ecNumber>
    </recommendedName>
</protein>
<feature type="chain" id="PRO_0000158133" description="Imidazoleglycerol-phosphate dehydratase">
    <location>
        <begin position="1"/>
        <end position="203"/>
    </location>
</feature>
<sequence length="203" mass="22433">MQERMAKNVIEISRTTKETDISLKLLVYGNGNAQIQSGIGFFDHMLQSLTKHSLIDLELACKGDTFIDGHHSVEDCGIVLGQGLAQGIYPAAGIERFGNASIVMDEACVECDIDVSNRAFLVFETNAYKLPFKGRVGELDVELVEEFFRALCFNAHLSAHIVLKRGKNLHHIIEAMFKAFGVSLRRALTLNPRILTPSTKGVL</sequence>
<name>HIS7_HELHP</name>
<evidence type="ECO:0000255" key="1">
    <source>
        <dbReference type="HAMAP-Rule" id="MF_00076"/>
    </source>
</evidence>
<comment type="catalytic activity">
    <reaction evidence="1">
        <text>D-erythro-1-(imidazol-4-yl)glycerol 3-phosphate = 3-(imidazol-4-yl)-2-oxopropyl phosphate + H2O</text>
        <dbReference type="Rhea" id="RHEA:11040"/>
        <dbReference type="ChEBI" id="CHEBI:15377"/>
        <dbReference type="ChEBI" id="CHEBI:57766"/>
        <dbReference type="ChEBI" id="CHEBI:58278"/>
        <dbReference type="EC" id="4.2.1.19"/>
    </reaction>
</comment>
<comment type="pathway">
    <text evidence="1">Amino-acid biosynthesis; L-histidine biosynthesis; L-histidine from 5-phospho-alpha-D-ribose 1-diphosphate: step 6/9.</text>
</comment>
<comment type="subcellular location">
    <subcellularLocation>
        <location evidence="1">Cytoplasm</location>
    </subcellularLocation>
</comment>
<comment type="similarity">
    <text evidence="1">Belongs to the imidazoleglycerol-phosphate dehydratase family.</text>
</comment>
<proteinExistence type="inferred from homology"/>